<reference key="1">
    <citation type="submission" date="2009-01" db="EMBL/GenBank/DDBJ databases">
        <title>Complete sequence of Diaphorobacter sp. TPSY.</title>
        <authorList>
            <consortium name="US DOE Joint Genome Institute"/>
            <person name="Lucas S."/>
            <person name="Copeland A."/>
            <person name="Lapidus A."/>
            <person name="Glavina del Rio T."/>
            <person name="Tice H."/>
            <person name="Bruce D."/>
            <person name="Goodwin L."/>
            <person name="Pitluck S."/>
            <person name="Chertkov O."/>
            <person name="Brettin T."/>
            <person name="Detter J.C."/>
            <person name="Han C."/>
            <person name="Larimer F."/>
            <person name="Land M."/>
            <person name="Hauser L."/>
            <person name="Kyrpides N."/>
            <person name="Mikhailova N."/>
            <person name="Coates J.D."/>
        </authorList>
    </citation>
    <scope>NUCLEOTIDE SEQUENCE [LARGE SCALE GENOMIC DNA]</scope>
    <source>
        <strain>TPSY</strain>
    </source>
</reference>
<comment type="function">
    <text evidence="1">Catalyzes the radical-mediated insertion of two sulfur atoms into the C-6 and C-8 positions of the octanoyl moiety bound to the lipoyl domains of lipoate-dependent enzymes, thereby converting the octanoylated domains into lipoylated derivatives.</text>
</comment>
<comment type="catalytic activity">
    <reaction evidence="1">
        <text>[[Fe-S] cluster scaffold protein carrying a second [4Fe-4S](2+) cluster] + N(6)-octanoyl-L-lysyl-[protein] + 2 oxidized [2Fe-2S]-[ferredoxin] + 2 S-adenosyl-L-methionine + 4 H(+) = [[Fe-S] cluster scaffold protein] + N(6)-[(R)-dihydrolipoyl]-L-lysyl-[protein] + 4 Fe(3+) + 2 hydrogen sulfide + 2 5'-deoxyadenosine + 2 L-methionine + 2 reduced [2Fe-2S]-[ferredoxin]</text>
        <dbReference type="Rhea" id="RHEA:16585"/>
        <dbReference type="Rhea" id="RHEA-COMP:9928"/>
        <dbReference type="Rhea" id="RHEA-COMP:10000"/>
        <dbReference type="Rhea" id="RHEA-COMP:10001"/>
        <dbReference type="Rhea" id="RHEA-COMP:10475"/>
        <dbReference type="Rhea" id="RHEA-COMP:14568"/>
        <dbReference type="Rhea" id="RHEA-COMP:14569"/>
        <dbReference type="ChEBI" id="CHEBI:15378"/>
        <dbReference type="ChEBI" id="CHEBI:17319"/>
        <dbReference type="ChEBI" id="CHEBI:29034"/>
        <dbReference type="ChEBI" id="CHEBI:29919"/>
        <dbReference type="ChEBI" id="CHEBI:33722"/>
        <dbReference type="ChEBI" id="CHEBI:33737"/>
        <dbReference type="ChEBI" id="CHEBI:33738"/>
        <dbReference type="ChEBI" id="CHEBI:57844"/>
        <dbReference type="ChEBI" id="CHEBI:59789"/>
        <dbReference type="ChEBI" id="CHEBI:78809"/>
        <dbReference type="ChEBI" id="CHEBI:83100"/>
        <dbReference type="EC" id="2.8.1.8"/>
    </reaction>
</comment>
<comment type="cofactor">
    <cofactor evidence="1">
        <name>[4Fe-4S] cluster</name>
        <dbReference type="ChEBI" id="CHEBI:49883"/>
    </cofactor>
    <text evidence="1">Binds 2 [4Fe-4S] clusters per subunit. One cluster is coordinated with 3 cysteines and an exchangeable S-adenosyl-L-methionine.</text>
</comment>
<comment type="pathway">
    <text evidence="1">Protein modification; protein lipoylation via endogenous pathway; protein N(6)-(lipoyl)lysine from octanoyl-[acyl-carrier-protein]: step 2/2.</text>
</comment>
<comment type="subcellular location">
    <subcellularLocation>
        <location evidence="1">Cytoplasm</location>
    </subcellularLocation>
</comment>
<comment type="similarity">
    <text evidence="1">Belongs to the radical SAM superfamily. Lipoyl synthase family.</text>
</comment>
<name>LIPA_ACIET</name>
<accession>B9MB93</accession>
<protein>
    <recommendedName>
        <fullName evidence="1">Lipoyl synthase</fullName>
        <ecNumber evidence="1">2.8.1.8</ecNumber>
    </recommendedName>
    <alternativeName>
        <fullName evidence="1">Lip-syn</fullName>
        <shortName evidence="1">LS</shortName>
    </alternativeName>
    <alternativeName>
        <fullName evidence="1">Lipoate synthase</fullName>
    </alternativeName>
    <alternativeName>
        <fullName evidence="1">Lipoic acid synthase</fullName>
    </alternativeName>
    <alternativeName>
        <fullName evidence="1">Sulfur insertion protein LipA</fullName>
    </alternativeName>
</protein>
<keyword id="KW-0004">4Fe-4S</keyword>
<keyword id="KW-0963">Cytoplasm</keyword>
<keyword id="KW-0408">Iron</keyword>
<keyword id="KW-0411">Iron-sulfur</keyword>
<keyword id="KW-0479">Metal-binding</keyword>
<keyword id="KW-1185">Reference proteome</keyword>
<keyword id="KW-0949">S-adenosyl-L-methionine</keyword>
<keyword id="KW-0808">Transferase</keyword>
<dbReference type="EC" id="2.8.1.8" evidence="1"/>
<dbReference type="EMBL" id="CP001392">
    <property type="protein sequence ID" value="ACM31777.1"/>
    <property type="molecule type" value="Genomic_DNA"/>
</dbReference>
<dbReference type="RefSeq" id="WP_011803762.1">
    <property type="nucleotide sequence ID" value="NC_011992.1"/>
</dbReference>
<dbReference type="SMR" id="B9MB93"/>
<dbReference type="GeneID" id="84683192"/>
<dbReference type="KEGG" id="dia:Dtpsy_0293"/>
<dbReference type="eggNOG" id="COG0320">
    <property type="taxonomic scope" value="Bacteria"/>
</dbReference>
<dbReference type="HOGENOM" id="CLU_033144_2_1_4"/>
<dbReference type="UniPathway" id="UPA00538">
    <property type="reaction ID" value="UER00593"/>
</dbReference>
<dbReference type="Proteomes" id="UP000000450">
    <property type="component" value="Chromosome"/>
</dbReference>
<dbReference type="GO" id="GO:0005737">
    <property type="term" value="C:cytoplasm"/>
    <property type="evidence" value="ECO:0007669"/>
    <property type="project" value="UniProtKB-SubCell"/>
</dbReference>
<dbReference type="GO" id="GO:0051539">
    <property type="term" value="F:4 iron, 4 sulfur cluster binding"/>
    <property type="evidence" value="ECO:0007669"/>
    <property type="project" value="UniProtKB-UniRule"/>
</dbReference>
<dbReference type="GO" id="GO:0016992">
    <property type="term" value="F:lipoate synthase activity"/>
    <property type="evidence" value="ECO:0007669"/>
    <property type="project" value="UniProtKB-UniRule"/>
</dbReference>
<dbReference type="GO" id="GO:0046872">
    <property type="term" value="F:metal ion binding"/>
    <property type="evidence" value="ECO:0007669"/>
    <property type="project" value="UniProtKB-KW"/>
</dbReference>
<dbReference type="CDD" id="cd01335">
    <property type="entry name" value="Radical_SAM"/>
    <property type="match status" value="1"/>
</dbReference>
<dbReference type="FunFam" id="3.20.20.70:FF:000040">
    <property type="entry name" value="Lipoyl synthase"/>
    <property type="match status" value="1"/>
</dbReference>
<dbReference type="Gene3D" id="3.20.20.70">
    <property type="entry name" value="Aldolase class I"/>
    <property type="match status" value="1"/>
</dbReference>
<dbReference type="HAMAP" id="MF_00206">
    <property type="entry name" value="Lipoyl_synth"/>
    <property type="match status" value="1"/>
</dbReference>
<dbReference type="InterPro" id="IPR013785">
    <property type="entry name" value="Aldolase_TIM"/>
</dbReference>
<dbReference type="InterPro" id="IPR006638">
    <property type="entry name" value="Elp3/MiaA/NifB-like_rSAM"/>
</dbReference>
<dbReference type="InterPro" id="IPR031691">
    <property type="entry name" value="LIAS_N"/>
</dbReference>
<dbReference type="InterPro" id="IPR003698">
    <property type="entry name" value="Lipoyl_synth"/>
</dbReference>
<dbReference type="InterPro" id="IPR007197">
    <property type="entry name" value="rSAM"/>
</dbReference>
<dbReference type="NCBIfam" id="TIGR00510">
    <property type="entry name" value="lipA"/>
    <property type="match status" value="1"/>
</dbReference>
<dbReference type="NCBIfam" id="NF004019">
    <property type="entry name" value="PRK05481.1"/>
    <property type="match status" value="1"/>
</dbReference>
<dbReference type="NCBIfam" id="NF009544">
    <property type="entry name" value="PRK12928.1"/>
    <property type="match status" value="1"/>
</dbReference>
<dbReference type="PANTHER" id="PTHR10949">
    <property type="entry name" value="LIPOYL SYNTHASE"/>
    <property type="match status" value="1"/>
</dbReference>
<dbReference type="PANTHER" id="PTHR10949:SF0">
    <property type="entry name" value="LIPOYL SYNTHASE, MITOCHONDRIAL"/>
    <property type="match status" value="1"/>
</dbReference>
<dbReference type="Pfam" id="PF16881">
    <property type="entry name" value="LIAS_N"/>
    <property type="match status" value="1"/>
</dbReference>
<dbReference type="Pfam" id="PF04055">
    <property type="entry name" value="Radical_SAM"/>
    <property type="match status" value="1"/>
</dbReference>
<dbReference type="PIRSF" id="PIRSF005963">
    <property type="entry name" value="Lipoyl_synth"/>
    <property type="match status" value="1"/>
</dbReference>
<dbReference type="SFLD" id="SFLDF00271">
    <property type="entry name" value="lipoyl_synthase"/>
    <property type="match status" value="1"/>
</dbReference>
<dbReference type="SFLD" id="SFLDG01058">
    <property type="entry name" value="lipoyl_synthase_like"/>
    <property type="match status" value="1"/>
</dbReference>
<dbReference type="SMART" id="SM00729">
    <property type="entry name" value="Elp3"/>
    <property type="match status" value="1"/>
</dbReference>
<dbReference type="SUPFAM" id="SSF102114">
    <property type="entry name" value="Radical SAM enzymes"/>
    <property type="match status" value="1"/>
</dbReference>
<dbReference type="PROSITE" id="PS51918">
    <property type="entry name" value="RADICAL_SAM"/>
    <property type="match status" value="1"/>
</dbReference>
<gene>
    <name evidence="1" type="primary">lipA</name>
    <name type="ordered locus">Dtpsy_0293</name>
</gene>
<feature type="chain" id="PRO_1000124629" description="Lipoyl synthase">
    <location>
        <begin position="1"/>
        <end position="326"/>
    </location>
</feature>
<feature type="domain" description="Radical SAM core" evidence="2">
    <location>
        <begin position="85"/>
        <end position="303"/>
    </location>
</feature>
<feature type="binding site" evidence="1">
    <location>
        <position position="74"/>
    </location>
    <ligand>
        <name>[4Fe-4S] cluster</name>
        <dbReference type="ChEBI" id="CHEBI:49883"/>
        <label>1</label>
    </ligand>
</feature>
<feature type="binding site" evidence="1">
    <location>
        <position position="79"/>
    </location>
    <ligand>
        <name>[4Fe-4S] cluster</name>
        <dbReference type="ChEBI" id="CHEBI:49883"/>
        <label>1</label>
    </ligand>
</feature>
<feature type="binding site" evidence="1">
    <location>
        <position position="85"/>
    </location>
    <ligand>
        <name>[4Fe-4S] cluster</name>
        <dbReference type="ChEBI" id="CHEBI:49883"/>
        <label>1</label>
    </ligand>
</feature>
<feature type="binding site" evidence="1">
    <location>
        <position position="100"/>
    </location>
    <ligand>
        <name>[4Fe-4S] cluster</name>
        <dbReference type="ChEBI" id="CHEBI:49883"/>
        <label>2</label>
        <note>4Fe-4S-S-AdoMet</note>
    </ligand>
</feature>
<feature type="binding site" evidence="1">
    <location>
        <position position="104"/>
    </location>
    <ligand>
        <name>[4Fe-4S] cluster</name>
        <dbReference type="ChEBI" id="CHEBI:49883"/>
        <label>2</label>
        <note>4Fe-4S-S-AdoMet</note>
    </ligand>
</feature>
<feature type="binding site" evidence="1">
    <location>
        <position position="107"/>
    </location>
    <ligand>
        <name>[4Fe-4S] cluster</name>
        <dbReference type="ChEBI" id="CHEBI:49883"/>
        <label>2</label>
        <note>4Fe-4S-S-AdoMet</note>
    </ligand>
</feature>
<feature type="binding site" evidence="1">
    <location>
        <position position="314"/>
    </location>
    <ligand>
        <name>[4Fe-4S] cluster</name>
        <dbReference type="ChEBI" id="CHEBI:49883"/>
        <label>1</label>
    </ligand>
</feature>
<sequence>MSTPDVVREAQSTEAYNPLAKQKAAAKLSRIPIKVEQGEVLKKPEWIRVKAGSPTTRFYEIKNILREHKLHTVCEEASCPNIGECFGRGTATFMIMGDKCTRRCPFCDVGHGRPDPLDKDEPLNLAKTIAALRLKYVVITSVDRDDLRDGGSGHFVECIQRTRELSPSTQIEILTPDFRGRDDRALEILKAAPPDVMNHNLETVPRLYKEARPGSDYQFSLNLLKKFKQLHPGVPTKSGLMVGLGETDEEILEVMRDMRAHGIEMLTIGQYLAPSNSHLPVRRYVHPDTFKMFEEEAYKMGFSHAAVGAMVRSSYHADQQAHAAGV</sequence>
<organism>
    <name type="scientific">Acidovorax ebreus (strain TPSY)</name>
    <name type="common">Diaphorobacter sp. (strain TPSY)</name>
    <dbReference type="NCBI Taxonomy" id="535289"/>
    <lineage>
        <taxon>Bacteria</taxon>
        <taxon>Pseudomonadati</taxon>
        <taxon>Pseudomonadota</taxon>
        <taxon>Betaproteobacteria</taxon>
        <taxon>Burkholderiales</taxon>
        <taxon>Comamonadaceae</taxon>
        <taxon>Diaphorobacter</taxon>
    </lineage>
</organism>
<proteinExistence type="inferred from homology"/>
<evidence type="ECO:0000255" key="1">
    <source>
        <dbReference type="HAMAP-Rule" id="MF_00206"/>
    </source>
</evidence>
<evidence type="ECO:0000255" key="2">
    <source>
        <dbReference type="PROSITE-ProRule" id="PRU01266"/>
    </source>
</evidence>